<organism>
    <name type="scientific">Pseudomonas fluorescens (strain ATCC BAA-477 / NRRL B-23932 / Pf-5)</name>
    <dbReference type="NCBI Taxonomy" id="220664"/>
    <lineage>
        <taxon>Bacteria</taxon>
        <taxon>Pseudomonadati</taxon>
        <taxon>Pseudomonadota</taxon>
        <taxon>Gammaproteobacteria</taxon>
        <taxon>Pseudomonadales</taxon>
        <taxon>Pseudomonadaceae</taxon>
        <taxon>Pseudomonas</taxon>
    </lineage>
</organism>
<protein>
    <recommendedName>
        <fullName evidence="1">Pyrimidine/purine nucleoside phosphorylase</fullName>
        <ecNumber evidence="1">2.4.2.1</ecNumber>
        <ecNumber evidence="1">2.4.2.2</ecNumber>
    </recommendedName>
    <alternativeName>
        <fullName evidence="1">Adenosine phosphorylase</fullName>
    </alternativeName>
    <alternativeName>
        <fullName evidence="1">Cytidine phosphorylase</fullName>
    </alternativeName>
    <alternativeName>
        <fullName evidence="1">Guanosine phosphorylase</fullName>
    </alternativeName>
    <alternativeName>
        <fullName evidence="1">Inosine phosphorylase</fullName>
    </alternativeName>
    <alternativeName>
        <fullName evidence="1">Thymidine phosphorylase</fullName>
    </alternativeName>
    <alternativeName>
        <fullName evidence="1">Uridine phosphorylase</fullName>
    </alternativeName>
    <alternativeName>
        <fullName evidence="1">Xanthosine phosphorylase</fullName>
    </alternativeName>
</protein>
<dbReference type="EC" id="2.4.2.1" evidence="1"/>
<dbReference type="EC" id="2.4.2.2" evidence="1"/>
<dbReference type="EMBL" id="CP000076">
    <property type="protein sequence ID" value="AAY93457.1"/>
    <property type="molecule type" value="Genomic_DNA"/>
</dbReference>
<dbReference type="RefSeq" id="WP_011062476.1">
    <property type="nucleotide sequence ID" value="NC_004129.6"/>
</dbReference>
<dbReference type="SMR" id="Q4K8Z0"/>
<dbReference type="STRING" id="220664.PFL_4201"/>
<dbReference type="KEGG" id="pfl:PFL_4201"/>
<dbReference type="eggNOG" id="COG3123">
    <property type="taxonomic scope" value="Bacteria"/>
</dbReference>
<dbReference type="HOGENOM" id="CLU_157874_0_0_6"/>
<dbReference type="Proteomes" id="UP000008540">
    <property type="component" value="Chromosome"/>
</dbReference>
<dbReference type="GO" id="GO:0005829">
    <property type="term" value="C:cytosol"/>
    <property type="evidence" value="ECO:0007669"/>
    <property type="project" value="TreeGrafter"/>
</dbReference>
<dbReference type="GO" id="GO:0047975">
    <property type="term" value="F:guanosine phosphorylase activity"/>
    <property type="evidence" value="ECO:0007669"/>
    <property type="project" value="UniProtKB-EC"/>
</dbReference>
<dbReference type="GO" id="GO:0004731">
    <property type="term" value="F:purine-nucleoside phosphorylase activity"/>
    <property type="evidence" value="ECO:0007669"/>
    <property type="project" value="UniProtKB-UniRule"/>
</dbReference>
<dbReference type="GO" id="GO:0009032">
    <property type="term" value="F:thymidine phosphorylase activity"/>
    <property type="evidence" value="ECO:0007669"/>
    <property type="project" value="UniProtKB-EC"/>
</dbReference>
<dbReference type="GO" id="GO:0004850">
    <property type="term" value="F:uridine phosphorylase activity"/>
    <property type="evidence" value="ECO:0007669"/>
    <property type="project" value="UniProtKB-EC"/>
</dbReference>
<dbReference type="CDD" id="cd20296">
    <property type="entry name" value="cupin_PpnP-like"/>
    <property type="match status" value="1"/>
</dbReference>
<dbReference type="FunFam" id="2.60.120.10:FF:000016">
    <property type="entry name" value="Pyrimidine/purine nucleoside phosphorylase"/>
    <property type="match status" value="1"/>
</dbReference>
<dbReference type="Gene3D" id="2.60.120.10">
    <property type="entry name" value="Jelly Rolls"/>
    <property type="match status" value="1"/>
</dbReference>
<dbReference type="HAMAP" id="MF_01537">
    <property type="entry name" value="Nucleos_phosphorylase_PpnP"/>
    <property type="match status" value="1"/>
</dbReference>
<dbReference type="InterPro" id="IPR009664">
    <property type="entry name" value="Ppnp"/>
</dbReference>
<dbReference type="InterPro" id="IPR014710">
    <property type="entry name" value="RmlC-like_jellyroll"/>
</dbReference>
<dbReference type="InterPro" id="IPR011051">
    <property type="entry name" value="RmlC_Cupin_sf"/>
</dbReference>
<dbReference type="PANTHER" id="PTHR36540">
    <property type="entry name" value="PYRIMIDINE/PURINE NUCLEOSIDE PHOSPHORYLASE"/>
    <property type="match status" value="1"/>
</dbReference>
<dbReference type="PANTHER" id="PTHR36540:SF1">
    <property type="entry name" value="PYRIMIDINE_PURINE NUCLEOSIDE PHOSPHORYLASE"/>
    <property type="match status" value="1"/>
</dbReference>
<dbReference type="Pfam" id="PF06865">
    <property type="entry name" value="Ppnp"/>
    <property type="match status" value="1"/>
</dbReference>
<dbReference type="SUPFAM" id="SSF51182">
    <property type="entry name" value="RmlC-like cupins"/>
    <property type="match status" value="1"/>
</dbReference>
<evidence type="ECO:0000255" key="1">
    <source>
        <dbReference type="HAMAP-Rule" id="MF_01537"/>
    </source>
</evidence>
<name>PPNP_PSEF5</name>
<feature type="chain" id="PRO_0000298711" description="Pyrimidine/purine nucleoside phosphorylase">
    <location>
        <begin position="1"/>
        <end position="94"/>
    </location>
</feature>
<reference key="1">
    <citation type="journal article" date="2005" name="Nat. Biotechnol.">
        <title>Complete genome sequence of the plant commensal Pseudomonas fluorescens Pf-5.</title>
        <authorList>
            <person name="Paulsen I.T."/>
            <person name="Press C.M."/>
            <person name="Ravel J."/>
            <person name="Kobayashi D.Y."/>
            <person name="Myers G.S.A."/>
            <person name="Mavrodi D.V."/>
            <person name="DeBoy R.T."/>
            <person name="Seshadri R."/>
            <person name="Ren Q."/>
            <person name="Madupu R."/>
            <person name="Dodson R.J."/>
            <person name="Durkin A.S."/>
            <person name="Brinkac L.M."/>
            <person name="Daugherty S.C."/>
            <person name="Sullivan S.A."/>
            <person name="Rosovitz M.J."/>
            <person name="Gwinn M.L."/>
            <person name="Zhou L."/>
            <person name="Schneider D.J."/>
            <person name="Cartinhour S.W."/>
            <person name="Nelson W.C."/>
            <person name="Weidman J."/>
            <person name="Watkins K."/>
            <person name="Tran K."/>
            <person name="Khouri H."/>
            <person name="Pierson E.A."/>
            <person name="Pierson L.S. III"/>
            <person name="Thomashow L.S."/>
            <person name="Loper J.E."/>
        </authorList>
    </citation>
    <scope>NUCLEOTIDE SEQUENCE [LARGE SCALE GENOMIC DNA]</scope>
    <source>
        <strain>ATCC BAA-477 / NRRL B-23932 / Pf-5</strain>
    </source>
</reference>
<gene>
    <name evidence="1" type="primary">ppnP</name>
    <name type="ordered locus">PFL_4201</name>
</gene>
<keyword id="KW-0328">Glycosyltransferase</keyword>
<keyword id="KW-0808">Transferase</keyword>
<proteinExistence type="inferred from homology"/>
<accession>Q4K8Z0</accession>
<sequence length="94" mass="10202">MFKVNEYFDGTVKSIAFGTAEGPATIGVMAPGEYEFGTAQREIMHVVSGALTVRLPDSADWETFPAGSQFNVPANSKFQLKVAVDTAYLCEYRG</sequence>
<comment type="function">
    <text evidence="1">Catalyzes the phosphorolysis of diverse nucleosides, yielding D-ribose 1-phosphate and the respective free bases. Can use uridine, adenosine, guanosine, cytidine, thymidine, inosine and xanthosine as substrates. Also catalyzes the reverse reactions.</text>
</comment>
<comment type="catalytic activity">
    <reaction evidence="1">
        <text>a purine D-ribonucleoside + phosphate = a purine nucleobase + alpha-D-ribose 1-phosphate</text>
        <dbReference type="Rhea" id="RHEA:19805"/>
        <dbReference type="ChEBI" id="CHEBI:26386"/>
        <dbReference type="ChEBI" id="CHEBI:43474"/>
        <dbReference type="ChEBI" id="CHEBI:57720"/>
        <dbReference type="ChEBI" id="CHEBI:142355"/>
        <dbReference type="EC" id="2.4.2.1"/>
    </reaction>
</comment>
<comment type="catalytic activity">
    <reaction evidence="1">
        <text>adenosine + phosphate = alpha-D-ribose 1-phosphate + adenine</text>
        <dbReference type="Rhea" id="RHEA:27642"/>
        <dbReference type="ChEBI" id="CHEBI:16335"/>
        <dbReference type="ChEBI" id="CHEBI:16708"/>
        <dbReference type="ChEBI" id="CHEBI:43474"/>
        <dbReference type="ChEBI" id="CHEBI:57720"/>
        <dbReference type="EC" id="2.4.2.1"/>
    </reaction>
</comment>
<comment type="catalytic activity">
    <reaction evidence="1">
        <text>cytidine + phosphate = cytosine + alpha-D-ribose 1-phosphate</text>
        <dbReference type="Rhea" id="RHEA:52540"/>
        <dbReference type="ChEBI" id="CHEBI:16040"/>
        <dbReference type="ChEBI" id="CHEBI:17562"/>
        <dbReference type="ChEBI" id="CHEBI:43474"/>
        <dbReference type="ChEBI" id="CHEBI:57720"/>
        <dbReference type="EC" id="2.4.2.2"/>
    </reaction>
</comment>
<comment type="catalytic activity">
    <reaction evidence="1">
        <text>guanosine + phosphate = alpha-D-ribose 1-phosphate + guanine</text>
        <dbReference type="Rhea" id="RHEA:13233"/>
        <dbReference type="ChEBI" id="CHEBI:16235"/>
        <dbReference type="ChEBI" id="CHEBI:16750"/>
        <dbReference type="ChEBI" id="CHEBI:43474"/>
        <dbReference type="ChEBI" id="CHEBI:57720"/>
        <dbReference type="EC" id="2.4.2.1"/>
    </reaction>
</comment>
<comment type="catalytic activity">
    <reaction evidence="1">
        <text>inosine + phosphate = alpha-D-ribose 1-phosphate + hypoxanthine</text>
        <dbReference type="Rhea" id="RHEA:27646"/>
        <dbReference type="ChEBI" id="CHEBI:17368"/>
        <dbReference type="ChEBI" id="CHEBI:17596"/>
        <dbReference type="ChEBI" id="CHEBI:43474"/>
        <dbReference type="ChEBI" id="CHEBI:57720"/>
        <dbReference type="EC" id="2.4.2.1"/>
    </reaction>
</comment>
<comment type="catalytic activity">
    <reaction evidence="1">
        <text>thymidine + phosphate = 2-deoxy-alpha-D-ribose 1-phosphate + thymine</text>
        <dbReference type="Rhea" id="RHEA:16037"/>
        <dbReference type="ChEBI" id="CHEBI:17748"/>
        <dbReference type="ChEBI" id="CHEBI:17821"/>
        <dbReference type="ChEBI" id="CHEBI:43474"/>
        <dbReference type="ChEBI" id="CHEBI:57259"/>
        <dbReference type="EC" id="2.4.2.2"/>
    </reaction>
</comment>
<comment type="catalytic activity">
    <reaction evidence="1">
        <text>uridine + phosphate = alpha-D-ribose 1-phosphate + uracil</text>
        <dbReference type="Rhea" id="RHEA:24388"/>
        <dbReference type="ChEBI" id="CHEBI:16704"/>
        <dbReference type="ChEBI" id="CHEBI:17568"/>
        <dbReference type="ChEBI" id="CHEBI:43474"/>
        <dbReference type="ChEBI" id="CHEBI:57720"/>
        <dbReference type="EC" id="2.4.2.2"/>
    </reaction>
</comment>
<comment type="catalytic activity">
    <reaction evidence="1">
        <text>xanthosine + phosphate = alpha-D-ribose 1-phosphate + xanthine</text>
        <dbReference type="Rhea" id="RHEA:27638"/>
        <dbReference type="ChEBI" id="CHEBI:17712"/>
        <dbReference type="ChEBI" id="CHEBI:18107"/>
        <dbReference type="ChEBI" id="CHEBI:43474"/>
        <dbReference type="ChEBI" id="CHEBI:57720"/>
        <dbReference type="EC" id="2.4.2.1"/>
    </reaction>
</comment>
<comment type="similarity">
    <text evidence="1">Belongs to the nucleoside phosphorylase PpnP family.</text>
</comment>